<reference key="1">
    <citation type="journal article" date="1989" name="J. Biol. Chem.">
        <title>Platelet-derived growth factor-inducible gene JE is a member of a family of small inducible genes related to platelet factor 4.</title>
        <authorList>
            <person name="Kawahara R.S."/>
            <person name="Deuel T.F."/>
        </authorList>
    </citation>
    <scope>NUCLEOTIDE SEQUENCE [GENOMIC DNA]</scope>
</reference>
<reference key="2">
    <citation type="journal article" date="1988" name="Proc. Natl. Acad. Sci. U.S.A.">
        <title>Cloning and expression of JE, a gene inducible by platelet-derived growth factor and whose product has cytokine-like properties.</title>
        <authorList>
            <person name="Rollins B.J."/>
            <person name="Morrison E.D."/>
            <person name="Stiles C.D."/>
        </authorList>
    </citation>
    <scope>NUCLEOTIDE SEQUENCE [GENOMIC DNA]</scope>
</reference>
<reference key="3">
    <citation type="journal article" date="1999" name="J. Immunol.">
        <title>Sequence polymorphisms in the chemokines Scya1 (TCA-3), Scya2 (monocyte chemoattractant protein (MCP)-1), and Scya12 (MCP-5) are candidates for eae7, a locus controlling susceptibility to monophasic remitting/nonrelapsing experimental allergic encephalomyelitis.</title>
        <authorList>
            <person name="Teuscher C."/>
            <person name="Butterfield R.J."/>
            <person name="Ma R.Z."/>
            <person name="Zachary J.F."/>
            <person name="Doerge R.W."/>
            <person name="Blankenhorn E.P."/>
        </authorList>
    </citation>
    <scope>NUCLEOTIDE SEQUENCE [MRNA]</scope>
    <scope>POLYMORPHISM</scope>
    <scope>VARIANTS GLY-50 AND GLN-92</scope>
    <source>
        <strain>B10.S/J</strain>
        <strain>BALB/cJ</strain>
        <strain>DBA/2J</strain>
        <strain>NOD/LtJ</strain>
        <strain>SJL/J</strain>
        <tissue>Spleen</tissue>
    </source>
</reference>
<reference key="4">
    <citation type="journal article" date="1991" name="Eur. J. Biochem.">
        <title>Production and identification of natural monocyte chemotactic protein from virally infected murine fibroblasts. Relationship with the product of the mouse competence (JE) gene.</title>
        <authorList>
            <person name="van Damme J."/>
            <person name="Decock B."/>
            <person name="Bertini R."/>
            <person name="Conings R."/>
            <person name="Lenaerts J.-P."/>
            <person name="Put W."/>
            <person name="Opdenakker G."/>
            <person name="Mantovani A."/>
        </authorList>
    </citation>
    <scope>PROTEIN SEQUENCE OF 26-42</scope>
</reference>
<reference key="5">
    <citation type="journal article" date="2013" name="J. Lipid Res.">
        <title>Fat-specific protein 27 modulates nuclear factor of activated T cells 5 and the cellular response to stress.</title>
        <authorList>
            <person name="Ueno M."/>
            <person name="Shen W.J."/>
            <person name="Patel S."/>
            <person name="Greenberg A.S."/>
            <person name="Azhar S."/>
            <person name="Kraemer F.B."/>
        </authorList>
    </citation>
    <scope>INDUCTION BY OSMOTIC STRESS</scope>
</reference>
<reference key="6">
    <citation type="journal article" date="2018" name="Neuropsychopharmacology">
        <title>Chemokine receptor CCR2 contributes to neuropathic pain and the associated depression via increasing NR2B-mediated currents in both D1 and D2 dopamine receptor-containing medium spiny neurons in the nucleus accumbens shell.</title>
        <authorList>
            <person name="Wu X.B."/>
            <person name="Jing P.B."/>
            <person name="Zhang Z.J."/>
            <person name="Cao D.L."/>
            <person name="Gao M.H."/>
            <person name="Jiang B.C."/>
            <person name="Gao Y.J."/>
        </authorList>
    </citation>
    <scope>FUNCTION</scope>
    <scope>INDUCTION</scope>
</reference>
<keyword id="KW-0145">Chemotaxis</keyword>
<keyword id="KW-0202">Cytokine</keyword>
<keyword id="KW-0903">Direct protein sequencing</keyword>
<keyword id="KW-1015">Disulfide bond</keyword>
<keyword id="KW-0325">Glycoprotein</keyword>
<keyword id="KW-0395">Inflammatory response</keyword>
<keyword id="KW-0873">Pyrrolidone carboxylic acid</keyword>
<keyword id="KW-1185">Reference proteome</keyword>
<keyword id="KW-0964">Secreted</keyword>
<keyword id="KW-0732">Signal</keyword>
<gene>
    <name type="primary">Ccl2</name>
    <name type="synonym">Je</name>
    <name type="synonym">Mcp1</name>
    <name type="synonym">Scya2</name>
</gene>
<dbReference type="EMBL" id="J04467">
    <property type="protein sequence ID" value="AAA37685.1"/>
    <property type="molecule type" value="Genomic_DNA"/>
</dbReference>
<dbReference type="EMBL" id="M19681">
    <property type="protein sequence ID" value="AAA37684.1"/>
    <property type="molecule type" value="Genomic_DNA"/>
</dbReference>
<dbReference type="EMBL" id="AF065929">
    <property type="protein sequence ID" value="AAF15379.1"/>
    <property type="molecule type" value="mRNA"/>
</dbReference>
<dbReference type="EMBL" id="AF065930">
    <property type="protein sequence ID" value="AAF15380.1"/>
    <property type="molecule type" value="mRNA"/>
</dbReference>
<dbReference type="EMBL" id="AF065931">
    <property type="protein sequence ID" value="AAF15381.1"/>
    <property type="molecule type" value="mRNA"/>
</dbReference>
<dbReference type="EMBL" id="AF065932">
    <property type="protein sequence ID" value="AAF15382.1"/>
    <property type="molecule type" value="mRNA"/>
</dbReference>
<dbReference type="EMBL" id="AF065933">
    <property type="protein sequence ID" value="AAF15383.1"/>
    <property type="molecule type" value="mRNA"/>
</dbReference>
<dbReference type="CCDS" id="CCDS25139.1"/>
<dbReference type="PIR" id="A30209">
    <property type="entry name" value="A30209"/>
</dbReference>
<dbReference type="PIR" id="S16226">
    <property type="entry name" value="S16226"/>
</dbReference>
<dbReference type="RefSeq" id="NP_035463.1">
    <property type="nucleotide sequence ID" value="NM_011333.3"/>
</dbReference>
<dbReference type="SMR" id="P10148"/>
<dbReference type="BioGRID" id="203121">
    <property type="interactions" value="2"/>
</dbReference>
<dbReference type="DIP" id="DIP-61917N"/>
<dbReference type="FunCoup" id="P10148">
    <property type="interactions" value="614"/>
</dbReference>
<dbReference type="IntAct" id="P10148">
    <property type="interactions" value="1"/>
</dbReference>
<dbReference type="STRING" id="10090.ENSMUSP00000000193"/>
<dbReference type="GlyCosmos" id="P10148">
    <property type="glycosylation" value="1 site, No reported glycans"/>
</dbReference>
<dbReference type="GlyGen" id="P10148">
    <property type="glycosylation" value="1 site"/>
</dbReference>
<dbReference type="iPTMnet" id="P10148"/>
<dbReference type="PhosphoSitePlus" id="P10148"/>
<dbReference type="PaxDb" id="10090-ENSMUSP00000000193"/>
<dbReference type="PeptideAtlas" id="P10148"/>
<dbReference type="Antibodypedia" id="4427">
    <property type="antibodies" value="1786 antibodies from 47 providers"/>
</dbReference>
<dbReference type="DNASU" id="20296"/>
<dbReference type="Ensembl" id="ENSMUST00000000193.6">
    <property type="protein sequence ID" value="ENSMUSP00000000193.6"/>
    <property type="gene ID" value="ENSMUSG00000035385.6"/>
</dbReference>
<dbReference type="GeneID" id="20296"/>
<dbReference type="KEGG" id="mmu:20296"/>
<dbReference type="UCSC" id="uc007kmp.1">
    <property type="organism name" value="mouse"/>
</dbReference>
<dbReference type="AGR" id="MGI:98259"/>
<dbReference type="CTD" id="6347"/>
<dbReference type="MGI" id="MGI:98259">
    <property type="gene designation" value="Ccl2"/>
</dbReference>
<dbReference type="VEuPathDB" id="HostDB:ENSMUSG00000035385"/>
<dbReference type="eggNOG" id="ENOG502S6ZP">
    <property type="taxonomic scope" value="Eukaryota"/>
</dbReference>
<dbReference type="GeneTree" id="ENSGT01130000278316"/>
<dbReference type="HOGENOM" id="CLU_141716_1_0_1"/>
<dbReference type="InParanoid" id="P10148"/>
<dbReference type="OMA" id="PLTCCYS"/>
<dbReference type="OrthoDB" id="8900217at2759"/>
<dbReference type="PhylomeDB" id="P10148"/>
<dbReference type="TreeFam" id="TF339372"/>
<dbReference type="BioGRID-ORCS" id="20296">
    <property type="hits" value="4 hits in 80 CRISPR screens"/>
</dbReference>
<dbReference type="ChiTaRS" id="Ccl2">
    <property type="organism name" value="mouse"/>
</dbReference>
<dbReference type="PRO" id="PR:P10148"/>
<dbReference type="Proteomes" id="UP000000589">
    <property type="component" value="Chromosome 11"/>
</dbReference>
<dbReference type="RNAct" id="P10148">
    <property type="molecule type" value="protein"/>
</dbReference>
<dbReference type="Bgee" id="ENSMUSG00000035385">
    <property type="expression patterns" value="Expressed in endothelial cell of lymphatic vessel and 135 other cell types or tissues"/>
</dbReference>
<dbReference type="ExpressionAtlas" id="P10148">
    <property type="expression patterns" value="baseline and differential"/>
</dbReference>
<dbReference type="GO" id="GO:0043679">
    <property type="term" value="C:axon terminus"/>
    <property type="evidence" value="ECO:0007669"/>
    <property type="project" value="Ensembl"/>
</dbReference>
<dbReference type="GO" id="GO:0044299">
    <property type="term" value="C:C-fiber"/>
    <property type="evidence" value="ECO:0007669"/>
    <property type="project" value="Ensembl"/>
</dbReference>
<dbReference type="GO" id="GO:0030425">
    <property type="term" value="C:dendrite"/>
    <property type="evidence" value="ECO:0007669"/>
    <property type="project" value="Ensembl"/>
</dbReference>
<dbReference type="GO" id="GO:0030139">
    <property type="term" value="C:endocytic vesicle"/>
    <property type="evidence" value="ECO:0007669"/>
    <property type="project" value="Ensembl"/>
</dbReference>
<dbReference type="GO" id="GO:0005615">
    <property type="term" value="C:extracellular space"/>
    <property type="evidence" value="ECO:0000314"/>
    <property type="project" value="MGI"/>
</dbReference>
<dbReference type="GO" id="GO:0043204">
    <property type="term" value="C:perikaryon"/>
    <property type="evidence" value="ECO:0007669"/>
    <property type="project" value="Ensembl"/>
</dbReference>
<dbReference type="GO" id="GO:0048471">
    <property type="term" value="C:perinuclear region of cytoplasm"/>
    <property type="evidence" value="ECO:0007669"/>
    <property type="project" value="Ensembl"/>
</dbReference>
<dbReference type="GO" id="GO:0031727">
    <property type="term" value="F:CCR2 chemokine receptor binding"/>
    <property type="evidence" value="ECO:0000353"/>
    <property type="project" value="BHF-UCL"/>
</dbReference>
<dbReference type="GO" id="GO:0042056">
    <property type="term" value="F:chemoattractant activity"/>
    <property type="evidence" value="ECO:0000315"/>
    <property type="project" value="BHF-UCL"/>
</dbReference>
<dbReference type="GO" id="GO:0008009">
    <property type="term" value="F:chemokine activity"/>
    <property type="evidence" value="ECO:0007669"/>
    <property type="project" value="Ensembl"/>
</dbReference>
<dbReference type="GO" id="GO:0005125">
    <property type="term" value="F:cytokine activity"/>
    <property type="evidence" value="ECO:0000314"/>
    <property type="project" value="MGI"/>
</dbReference>
<dbReference type="GO" id="GO:0001664">
    <property type="term" value="F:G protein-coupled receptor binding"/>
    <property type="evidence" value="ECO:0000314"/>
    <property type="project" value="MGI"/>
</dbReference>
<dbReference type="GO" id="GO:0008201">
    <property type="term" value="F:heparin binding"/>
    <property type="evidence" value="ECO:0007669"/>
    <property type="project" value="Ensembl"/>
</dbReference>
<dbReference type="GO" id="GO:0001525">
    <property type="term" value="P:angiogenesis"/>
    <property type="evidence" value="ECO:0000304"/>
    <property type="project" value="BHF-UCL"/>
</dbReference>
<dbReference type="GO" id="GO:0031100">
    <property type="term" value="P:animal organ regeneration"/>
    <property type="evidence" value="ECO:0007669"/>
    <property type="project" value="Ensembl"/>
</dbReference>
<dbReference type="GO" id="GO:0043615">
    <property type="term" value="P:astrocyte cell migration"/>
    <property type="evidence" value="ECO:0000250"/>
    <property type="project" value="BHF-UCL"/>
</dbReference>
<dbReference type="GO" id="GO:0071318">
    <property type="term" value="P:cellular response to ATP"/>
    <property type="evidence" value="ECO:0007669"/>
    <property type="project" value="Ensembl"/>
</dbReference>
<dbReference type="GO" id="GO:0071549">
    <property type="term" value="P:cellular response to dexamethasone stimulus"/>
    <property type="evidence" value="ECO:0007669"/>
    <property type="project" value="Ensembl"/>
</dbReference>
<dbReference type="GO" id="GO:0071392">
    <property type="term" value="P:cellular response to estradiol stimulus"/>
    <property type="evidence" value="ECO:0007669"/>
    <property type="project" value="Ensembl"/>
</dbReference>
<dbReference type="GO" id="GO:0071398">
    <property type="term" value="P:cellular response to fatty acid"/>
    <property type="evidence" value="ECO:0007669"/>
    <property type="project" value="Ensembl"/>
</dbReference>
<dbReference type="GO" id="GO:0071333">
    <property type="term" value="P:cellular response to glucose stimulus"/>
    <property type="evidence" value="ECO:0007669"/>
    <property type="project" value="Ensembl"/>
</dbReference>
<dbReference type="GO" id="GO:0071403">
    <property type="term" value="P:cellular response to high density lipoprotein particle stimulus"/>
    <property type="evidence" value="ECO:0007669"/>
    <property type="project" value="Ensembl"/>
</dbReference>
<dbReference type="GO" id="GO:0032869">
    <property type="term" value="P:cellular response to insulin stimulus"/>
    <property type="evidence" value="ECO:0007669"/>
    <property type="project" value="Ensembl"/>
</dbReference>
<dbReference type="GO" id="GO:0071347">
    <property type="term" value="P:cellular response to interleukin-1"/>
    <property type="evidence" value="ECO:0000314"/>
    <property type="project" value="BHF-UCL"/>
</dbReference>
<dbReference type="GO" id="GO:0071354">
    <property type="term" value="P:cellular response to interleukin-6"/>
    <property type="evidence" value="ECO:0007669"/>
    <property type="project" value="Ensembl"/>
</dbReference>
<dbReference type="GO" id="GO:0071222">
    <property type="term" value="P:cellular response to lipopolysaccharide"/>
    <property type="evidence" value="ECO:0000314"/>
    <property type="project" value="BHF-UCL"/>
</dbReference>
<dbReference type="GO" id="GO:0036006">
    <property type="term" value="P:cellular response to macrophage colony-stimulating factor stimulus"/>
    <property type="evidence" value="ECO:0007669"/>
    <property type="project" value="Ensembl"/>
</dbReference>
<dbReference type="GO" id="GO:0036120">
    <property type="term" value="P:cellular response to platelet-derived growth factor stimulus"/>
    <property type="evidence" value="ECO:0007669"/>
    <property type="project" value="Ensembl"/>
</dbReference>
<dbReference type="GO" id="GO:0071300">
    <property type="term" value="P:cellular response to retinoic acid"/>
    <property type="evidence" value="ECO:0007669"/>
    <property type="project" value="Ensembl"/>
</dbReference>
<dbReference type="GO" id="GO:0071356">
    <property type="term" value="P:cellular response to tumor necrosis factor"/>
    <property type="evidence" value="ECO:0000314"/>
    <property type="project" value="BHF-UCL"/>
</dbReference>
<dbReference type="GO" id="GO:0071346">
    <property type="term" value="P:cellular response to type II interferon"/>
    <property type="evidence" value="ECO:0000314"/>
    <property type="project" value="BHF-UCL"/>
</dbReference>
<dbReference type="GO" id="GO:0071466">
    <property type="term" value="P:cellular response to xenobiotic stimulus"/>
    <property type="evidence" value="ECO:0007669"/>
    <property type="project" value="Ensembl"/>
</dbReference>
<dbReference type="GO" id="GO:0038148">
    <property type="term" value="P:chemokine (C-C motif) ligand 2 signaling pathway"/>
    <property type="evidence" value="ECO:0000315"/>
    <property type="project" value="BHF-UCL"/>
</dbReference>
<dbReference type="GO" id="GO:0002544">
    <property type="term" value="P:chronic inflammatory response"/>
    <property type="evidence" value="ECO:0007669"/>
    <property type="project" value="Ensembl"/>
</dbReference>
<dbReference type="GO" id="GO:0035684">
    <property type="term" value="P:helper T cell extravasation"/>
    <property type="evidence" value="ECO:0000314"/>
    <property type="project" value="BHF-UCL"/>
</dbReference>
<dbReference type="GO" id="GO:0006874">
    <property type="term" value="P:intracellular calcium ion homeostasis"/>
    <property type="evidence" value="ECO:0007669"/>
    <property type="project" value="Ensembl"/>
</dbReference>
<dbReference type="GO" id="GO:0002523">
    <property type="term" value="P:leukocyte migration involved in inflammatory response"/>
    <property type="evidence" value="ECO:0007669"/>
    <property type="project" value="Ensembl"/>
</dbReference>
<dbReference type="GO" id="GO:0048247">
    <property type="term" value="P:lymphocyte chemotaxis"/>
    <property type="evidence" value="ECO:0007669"/>
    <property type="project" value="Ensembl"/>
</dbReference>
<dbReference type="GO" id="GO:0048246">
    <property type="term" value="P:macrophage chemotaxis"/>
    <property type="evidence" value="ECO:0000250"/>
    <property type="project" value="BHF-UCL"/>
</dbReference>
<dbReference type="GO" id="GO:0060056">
    <property type="term" value="P:mammary gland involution"/>
    <property type="evidence" value="ECO:0007669"/>
    <property type="project" value="Ensembl"/>
</dbReference>
<dbReference type="GO" id="GO:0060135">
    <property type="term" value="P:maternal process involved in female pregnancy"/>
    <property type="evidence" value="ECO:0007669"/>
    <property type="project" value="Ensembl"/>
</dbReference>
<dbReference type="GO" id="GO:0060137">
    <property type="term" value="P:maternal process involved in parturition"/>
    <property type="evidence" value="ECO:0007669"/>
    <property type="project" value="Ensembl"/>
</dbReference>
<dbReference type="GO" id="GO:0035702">
    <property type="term" value="P:monocyte homeostasis"/>
    <property type="evidence" value="ECO:0000304"/>
    <property type="project" value="BHF-UCL"/>
</dbReference>
<dbReference type="GO" id="GO:0016525">
    <property type="term" value="P:negative regulation of angiogenesis"/>
    <property type="evidence" value="ECO:0000315"/>
    <property type="project" value="BHF-UCL"/>
</dbReference>
<dbReference type="GO" id="GO:0030593">
    <property type="term" value="P:neutrophil chemotaxis"/>
    <property type="evidence" value="ECO:0007669"/>
    <property type="project" value="Ensembl"/>
</dbReference>
<dbReference type="GO" id="GO:2000427">
    <property type="term" value="P:positive regulation of apoptotic cell clearance"/>
    <property type="evidence" value="ECO:0000314"/>
    <property type="project" value="BHF-UCL"/>
</dbReference>
<dbReference type="GO" id="GO:0002693">
    <property type="term" value="P:positive regulation of cellular extravasation"/>
    <property type="evidence" value="ECO:0007669"/>
    <property type="project" value="Ensembl"/>
</dbReference>
<dbReference type="GO" id="GO:0032967">
    <property type="term" value="P:positive regulation of collagen biosynthetic process"/>
    <property type="evidence" value="ECO:0007669"/>
    <property type="project" value="Ensembl"/>
</dbReference>
<dbReference type="GO" id="GO:0001938">
    <property type="term" value="P:positive regulation of endothelial cell proliferation"/>
    <property type="evidence" value="ECO:0007669"/>
    <property type="project" value="Ensembl"/>
</dbReference>
<dbReference type="GO" id="GO:0010628">
    <property type="term" value="P:positive regulation of gene expression"/>
    <property type="evidence" value="ECO:0000315"/>
    <property type="project" value="BHF-UCL"/>
</dbReference>
<dbReference type="GO" id="GO:1900451">
    <property type="term" value="P:positive regulation of glutamate receptor signaling pathway"/>
    <property type="evidence" value="ECO:0007669"/>
    <property type="project" value="Ensembl"/>
</dbReference>
<dbReference type="GO" id="GO:0090265">
    <property type="term" value="P:positive regulation of immune complex clearance by monocytes and macrophages"/>
    <property type="evidence" value="ECO:0000315"/>
    <property type="project" value="BHF-UCL"/>
</dbReference>
<dbReference type="GO" id="GO:0001912">
    <property type="term" value="P:positive regulation of leukocyte mediated cytotoxicity"/>
    <property type="evidence" value="ECO:0007669"/>
    <property type="project" value="Ensembl"/>
</dbReference>
<dbReference type="GO" id="GO:0010759">
    <property type="term" value="P:positive regulation of macrophage chemotaxis"/>
    <property type="evidence" value="ECO:0000314"/>
    <property type="project" value="BHF-UCL"/>
</dbReference>
<dbReference type="GO" id="GO:0090026">
    <property type="term" value="P:positive regulation of monocyte chemotaxis"/>
    <property type="evidence" value="ECO:0000314"/>
    <property type="project" value="UniProtKB"/>
</dbReference>
<dbReference type="GO" id="GO:0090314">
    <property type="term" value="P:positive regulation of protein targeting to membrane"/>
    <property type="evidence" value="ECO:0007669"/>
    <property type="project" value="Ensembl"/>
</dbReference>
<dbReference type="GO" id="GO:0051968">
    <property type="term" value="P:positive regulation of synaptic transmission, glutamatergic"/>
    <property type="evidence" value="ECO:0000314"/>
    <property type="project" value="UniProtKB"/>
</dbReference>
<dbReference type="GO" id="GO:0050870">
    <property type="term" value="P:positive regulation of T cell activation"/>
    <property type="evidence" value="ECO:0000315"/>
    <property type="project" value="BHF-UCL"/>
</dbReference>
<dbReference type="GO" id="GO:0032760">
    <property type="term" value="P:positive regulation of tumor necrosis factor production"/>
    <property type="evidence" value="ECO:0007669"/>
    <property type="project" value="Ensembl"/>
</dbReference>
<dbReference type="GO" id="GO:0090303">
    <property type="term" value="P:positive regulation of wound healing"/>
    <property type="evidence" value="ECO:0007669"/>
    <property type="project" value="Ensembl"/>
</dbReference>
<dbReference type="GO" id="GO:0010574">
    <property type="term" value="P:regulation of vascular endothelial growth factor production"/>
    <property type="evidence" value="ECO:0000315"/>
    <property type="project" value="BHF-UCL"/>
</dbReference>
<dbReference type="GO" id="GO:0014823">
    <property type="term" value="P:response to activity"/>
    <property type="evidence" value="ECO:0007669"/>
    <property type="project" value="Ensembl"/>
</dbReference>
<dbReference type="GO" id="GO:0043200">
    <property type="term" value="P:response to amino acid"/>
    <property type="evidence" value="ECO:0007669"/>
    <property type="project" value="Ensembl"/>
</dbReference>
<dbReference type="GO" id="GO:0009617">
    <property type="term" value="P:response to bacterium"/>
    <property type="evidence" value="ECO:0000270"/>
    <property type="project" value="MGI"/>
</dbReference>
<dbReference type="GO" id="GO:1905237">
    <property type="term" value="P:response to cyclosporin A"/>
    <property type="evidence" value="ECO:0007669"/>
    <property type="project" value="Ensembl"/>
</dbReference>
<dbReference type="GO" id="GO:0045471">
    <property type="term" value="P:response to ethanol"/>
    <property type="evidence" value="ECO:0007669"/>
    <property type="project" value="Ensembl"/>
</dbReference>
<dbReference type="GO" id="GO:0010332">
    <property type="term" value="P:response to gamma radiation"/>
    <property type="evidence" value="ECO:0007669"/>
    <property type="project" value="Ensembl"/>
</dbReference>
<dbReference type="GO" id="GO:0001666">
    <property type="term" value="P:response to hypoxia"/>
    <property type="evidence" value="ECO:0007669"/>
    <property type="project" value="Ensembl"/>
</dbReference>
<dbReference type="GO" id="GO:0035900">
    <property type="term" value="P:response to isolation stress"/>
    <property type="evidence" value="ECO:0007669"/>
    <property type="project" value="Ensembl"/>
</dbReference>
<dbReference type="GO" id="GO:0009612">
    <property type="term" value="P:response to mechanical stimulus"/>
    <property type="evidence" value="ECO:0007669"/>
    <property type="project" value="Ensembl"/>
</dbReference>
<dbReference type="GO" id="GO:0032570">
    <property type="term" value="P:response to progesterone"/>
    <property type="evidence" value="ECO:0007669"/>
    <property type="project" value="Ensembl"/>
</dbReference>
<dbReference type="GO" id="GO:0033552">
    <property type="term" value="P:response to vitamin B3"/>
    <property type="evidence" value="ECO:0007669"/>
    <property type="project" value="Ensembl"/>
</dbReference>
<dbReference type="GO" id="GO:0009611">
    <property type="term" value="P:response to wounding"/>
    <property type="evidence" value="ECO:0000314"/>
    <property type="project" value="MGI"/>
</dbReference>
<dbReference type="GO" id="GO:0019233">
    <property type="term" value="P:sensory perception of pain"/>
    <property type="evidence" value="ECO:0000314"/>
    <property type="project" value="UniProtKB"/>
</dbReference>
<dbReference type="GO" id="GO:0007179">
    <property type="term" value="P:transforming growth factor beta receptor signaling pathway"/>
    <property type="evidence" value="ECO:0007669"/>
    <property type="project" value="Ensembl"/>
</dbReference>
<dbReference type="GO" id="GO:0048010">
    <property type="term" value="P:vascular endothelial growth factor receptor signaling pathway"/>
    <property type="evidence" value="ECO:0007669"/>
    <property type="project" value="Ensembl"/>
</dbReference>
<dbReference type="CDD" id="cd00272">
    <property type="entry name" value="Chemokine_CC"/>
    <property type="match status" value="1"/>
</dbReference>
<dbReference type="FunFam" id="2.40.50.40:FF:000002">
    <property type="entry name" value="C-C motif chemokine"/>
    <property type="match status" value="1"/>
</dbReference>
<dbReference type="Gene3D" id="2.40.50.40">
    <property type="match status" value="1"/>
</dbReference>
<dbReference type="InterPro" id="IPR039809">
    <property type="entry name" value="Chemokine_b/g/d"/>
</dbReference>
<dbReference type="InterPro" id="IPR000827">
    <property type="entry name" value="Chemokine_CC_CS"/>
</dbReference>
<dbReference type="InterPro" id="IPR001811">
    <property type="entry name" value="Chemokine_IL8-like_dom"/>
</dbReference>
<dbReference type="InterPro" id="IPR036048">
    <property type="entry name" value="Interleukin_8-like_sf"/>
</dbReference>
<dbReference type="PANTHER" id="PTHR12015:SF117">
    <property type="entry name" value="C-C MOTIF CHEMOKINE 2"/>
    <property type="match status" value="1"/>
</dbReference>
<dbReference type="PANTHER" id="PTHR12015">
    <property type="entry name" value="SMALL INDUCIBLE CYTOKINE A"/>
    <property type="match status" value="1"/>
</dbReference>
<dbReference type="Pfam" id="PF00048">
    <property type="entry name" value="IL8"/>
    <property type="match status" value="1"/>
</dbReference>
<dbReference type="SMART" id="SM00199">
    <property type="entry name" value="SCY"/>
    <property type="match status" value="1"/>
</dbReference>
<dbReference type="SUPFAM" id="SSF54117">
    <property type="entry name" value="Interleukin 8-like chemokines"/>
    <property type="match status" value="1"/>
</dbReference>
<dbReference type="PROSITE" id="PS00472">
    <property type="entry name" value="SMALL_CYTOKINES_CC"/>
    <property type="match status" value="1"/>
</dbReference>
<feature type="signal peptide" evidence="1">
    <location>
        <begin position="1"/>
        <end position="23"/>
    </location>
</feature>
<feature type="chain" id="PRO_0000005149" description="C-C motif chemokine 2">
    <location>
        <begin position="24"/>
        <end position="148"/>
    </location>
</feature>
<feature type="modified residue" description="Pyrrolidone carboxylic acid" evidence="2">
    <location>
        <position position="24"/>
    </location>
</feature>
<feature type="glycosylation site" description="N-linked (GlcNAc...) asparagine" evidence="3">
    <location>
        <position position="126"/>
    </location>
</feature>
<feature type="disulfide bond" evidence="1">
    <location>
        <begin position="34"/>
        <end position="59"/>
    </location>
</feature>
<feature type="disulfide bond" evidence="1">
    <location>
        <begin position="35"/>
        <end position="75"/>
    </location>
</feature>
<feature type="sequence variant" description="In strain: SJL/J." evidence="4">
    <original>S</original>
    <variation>G</variation>
    <location>
        <position position="50"/>
    </location>
</feature>
<feature type="sequence variant" description="In strain: SJL/J." evidence="4">
    <original>R</original>
    <variation>Q</variation>
    <location>
        <position position="92"/>
    </location>
</feature>
<comment type="function">
    <text evidence="2 6">Acts as a ligand for C-C chemokine receptor CCR2 (By similarity). Signals through binding and activation of CCR2 and induces a strong chemotactic response and mobilization of intracellular calcium ions (By similarity). Exhibits a chemotactic activity for monocytes and basophils but not neutrophils or eosinophils (By similarity). Plays an important role in mediating peripheral nerve injury-induced neuropathic pain (PubMed:29993042). Increases NMDA-mediated synaptic transmission in both dopamine D1 and D2 receptor-containing neurons, which may be caused by MAPK/ERK-dependent phosphorylation of GRIN2B/NMDAR2B (PubMed:29993042).</text>
</comment>
<comment type="subunit">
    <text evidence="2">Monomer or homodimer; in equilibrium. Is tethered on endothelial cells by glycosaminoglycan (GAG) side chains of proteoglycans. Interacts with TNFAIP6 (via Link domain).</text>
</comment>
<comment type="interaction">
    <interactant intactId="EBI-16188285">
        <id>P10148</id>
    </interactant>
    <interactant intactId="EBI-16188152">
        <id>E9M5R0</id>
        <label>RHVP.R17</label>
    </interactant>
    <organismsDiffer>true</organismsDiffer>
    <experiments>2</experiments>
</comment>
<comment type="subcellular location">
    <subcellularLocation>
        <location evidence="2">Secreted</location>
    </subcellularLocation>
</comment>
<comment type="induction">
    <text evidence="5 6">By platelet-derived growth factor (PubMed:23233732). Up-regulated upon hypertonic conditions (PubMed:23233732). Up-regulated in the dopamine D1 and D2 receptor-containing neurons of nucleus accumbens shell after spinal nerve ligation (PubMed:29993042).</text>
</comment>
<comment type="PTM">
    <text evidence="2">Processing at the N-terminus can regulate receptor and target cell selectivity (By similarity). Deletion of the N-terminal residue converts it from an activator of basophil to an eosinophil chemoattractant (By similarity).</text>
</comment>
<comment type="PTM">
    <text evidence="2">N-Glycosylated.</text>
</comment>
<comment type="polymorphism">
    <text evidence="4">The polymorphisms in strain SJL/J may be associated with severity of clinical symptoms of experimental allergic encephalomyelitis, an animal model of multiple sclerosis, and susceptibility to the monophasic remitting/nonrelapsing form of the disease.</text>
</comment>
<comment type="similarity">
    <text evidence="7">Belongs to the intercrine beta (chemokine CC) family.</text>
</comment>
<sequence length="148" mass="16326">MQVPVMLLGLLFTVAGWSIHVLAQPDAVNAPLTCCYSFTSKMIPMSRLESYKRITSSRCPKEAVVFVTKLKREVCADPKKEWVQTYIKNLDRNQMRSEPTTLFKTASALRSSAPLNVKLTRKSEANASTTFSTTTSSTSVGVTSVTVN</sequence>
<evidence type="ECO:0000250" key="1"/>
<evidence type="ECO:0000250" key="2">
    <source>
        <dbReference type="UniProtKB" id="P13500"/>
    </source>
</evidence>
<evidence type="ECO:0000255" key="3"/>
<evidence type="ECO:0000269" key="4">
    <source>
    </source>
</evidence>
<evidence type="ECO:0000269" key="5">
    <source>
    </source>
</evidence>
<evidence type="ECO:0000269" key="6">
    <source>
    </source>
</evidence>
<evidence type="ECO:0000305" key="7"/>
<proteinExistence type="evidence at protein level"/>
<protein>
    <recommendedName>
        <fullName>C-C motif chemokine 2</fullName>
    </recommendedName>
    <alternativeName>
        <fullName>Monocyte chemoattractant protein 1</fullName>
    </alternativeName>
    <alternativeName>
        <fullName>Monocyte chemotactic protein 1</fullName>
        <shortName>MCP-1</shortName>
    </alternativeName>
    <alternativeName>
        <fullName>Platelet-derived growth factor-inducible protein JE</fullName>
    </alternativeName>
    <alternativeName>
        <fullName>Small-inducible cytokine A2</fullName>
    </alternativeName>
</protein>
<organism>
    <name type="scientific">Mus musculus</name>
    <name type="common">Mouse</name>
    <dbReference type="NCBI Taxonomy" id="10090"/>
    <lineage>
        <taxon>Eukaryota</taxon>
        <taxon>Metazoa</taxon>
        <taxon>Chordata</taxon>
        <taxon>Craniata</taxon>
        <taxon>Vertebrata</taxon>
        <taxon>Euteleostomi</taxon>
        <taxon>Mammalia</taxon>
        <taxon>Eutheria</taxon>
        <taxon>Euarchontoglires</taxon>
        <taxon>Glires</taxon>
        <taxon>Rodentia</taxon>
        <taxon>Myomorpha</taxon>
        <taxon>Muroidea</taxon>
        <taxon>Muridae</taxon>
        <taxon>Murinae</taxon>
        <taxon>Mus</taxon>
        <taxon>Mus</taxon>
    </lineage>
</organism>
<name>CCL2_MOUSE</name>
<accession>P10148</accession>
<accession>Q9QYD7</accession>